<organism>
    <name type="scientific">Arabidopsis thaliana</name>
    <name type="common">Mouse-ear cress</name>
    <dbReference type="NCBI Taxonomy" id="3702"/>
    <lineage>
        <taxon>Eukaryota</taxon>
        <taxon>Viridiplantae</taxon>
        <taxon>Streptophyta</taxon>
        <taxon>Embryophyta</taxon>
        <taxon>Tracheophyta</taxon>
        <taxon>Spermatophyta</taxon>
        <taxon>Magnoliopsida</taxon>
        <taxon>eudicotyledons</taxon>
        <taxon>Gunneridae</taxon>
        <taxon>Pentapetalae</taxon>
        <taxon>rosids</taxon>
        <taxon>malvids</taxon>
        <taxon>Brassicales</taxon>
        <taxon>Brassicaceae</taxon>
        <taxon>Camelineae</taxon>
        <taxon>Arabidopsis</taxon>
    </lineage>
</organism>
<feature type="transit peptide" description="Chloroplast" evidence="1">
    <location>
        <begin position="1"/>
        <end position="67"/>
    </location>
</feature>
<feature type="chain" id="PRO_0000422757" description="Copper chaperone for superoxide dismutase, chloroplastic/cytosolic">
    <location>
        <begin position="68"/>
        <end position="320"/>
    </location>
</feature>
<feature type="domain" description="HMA" evidence="2">
    <location>
        <begin position="86"/>
        <end position="149"/>
    </location>
</feature>
<feature type="binding site" evidence="2">
    <location>
        <position position="97"/>
    </location>
    <ligand>
        <name>Cu cation</name>
        <dbReference type="ChEBI" id="CHEBI:23378"/>
        <label>1</label>
    </ligand>
</feature>
<feature type="binding site" evidence="2">
    <location>
        <position position="100"/>
    </location>
    <ligand>
        <name>Cu cation</name>
        <dbReference type="ChEBI" id="CHEBI:23378"/>
        <label>1</label>
    </ligand>
</feature>
<feature type="binding site">
    <location>
        <position position="300"/>
    </location>
    <ligand>
        <name>Cu cation</name>
        <dbReference type="ChEBI" id="CHEBI:23378"/>
        <label>2</label>
    </ligand>
</feature>
<feature type="binding site">
    <location>
        <position position="302"/>
    </location>
    <ligand>
        <name>Cu cation</name>
        <dbReference type="ChEBI" id="CHEBI:23378"/>
        <label>2</label>
    </ligand>
</feature>
<feature type="splice variant" id="VSP_046612" description="In isoform 3." evidence="7">
    <location>
        <begin position="1"/>
        <end position="136"/>
    </location>
</feature>
<feature type="splice variant" id="VSP_046613" description="In isoform 2." evidence="7">
    <location>
        <begin position="1"/>
        <end position="91"/>
    </location>
</feature>
<feature type="sequence conflict" description="In Ref. 1; AAY22970." evidence="8" ref="1">
    <original>T</original>
    <variation>A</variation>
    <location>
        <position position="239"/>
    </location>
</feature>
<feature type="sequence conflict" description="In Ref. 1; AAY22970." evidence="8" ref="1">
    <original>S</original>
    <variation>N</variation>
    <location>
        <position position="313"/>
    </location>
</feature>
<gene>
    <name type="primary">CCS</name>
    <name type="ordered locus">At1g12520</name>
    <name type="ORF">F5O11.26</name>
    <name type="ORF">T12C24.6</name>
</gene>
<sequence length="320" mass="33851">MASILRSVATTSAVVAAASAIPIAIAFSSSSSSSSTNPKSQSLNFSFLSRSSPRLLGLSRSFVSSPMATALTSDRNLHQEDRAMPQLLTEFMVDMTCEGCVNAVKNKLETIEGIEKVEVDLSNQVVRILGSSPVKAMTQALEQTGRKARLIGQGVPQDFLVSAAVAEFKGPDIFGVVRFAQVSMELARIEANFTGLSPGTHSWCINEYGDLTNGAASTGSLYNPFQDQTGTEPLGDLGTLEADKNGEAFYSGKKEKLKVADLIGRAVVVYKTDDNKSGPGLTAAVIARSAGVGENYKKLCSCDGTVIWEATNSDFVASKV</sequence>
<accession>Q9LD47</accession>
<accession>Q4ZJI5</accession>
<accession>Q67Y08</accession>
<accession>Q681F4</accession>
<accession>Q94A55</accession>
<accession>Q9SPD6</accession>
<keyword id="KW-0025">Alternative splicing</keyword>
<keyword id="KW-0143">Chaperone</keyword>
<keyword id="KW-0150">Chloroplast</keyword>
<keyword id="KW-0186">Copper</keyword>
<keyword id="KW-0963">Cytoplasm</keyword>
<keyword id="KW-0479">Metal-binding</keyword>
<keyword id="KW-0934">Plastid</keyword>
<keyword id="KW-1185">Reference proteome</keyword>
<keyword id="KW-0346">Stress response</keyword>
<keyword id="KW-0809">Transit peptide</keyword>
<protein>
    <recommendedName>
        <fullName>Copper chaperone for superoxide dismutase, chloroplastic/cytosolic</fullName>
        <shortName>AtCCS</shortName>
    </recommendedName>
    <alternativeName>
        <fullName>Superoxide dismutase copper chaperone</fullName>
    </alternativeName>
</protein>
<dbReference type="EMBL" id="DQ003058">
    <property type="protein sequence ID" value="AAY22970.1"/>
    <property type="molecule type" value="mRNA"/>
</dbReference>
<dbReference type="EMBL" id="AC025416">
    <property type="protein sequence ID" value="AAF79650.1"/>
    <property type="molecule type" value="Genomic_DNA"/>
</dbReference>
<dbReference type="EMBL" id="AC025417">
    <property type="protein sequence ID" value="AAF88100.1"/>
    <property type="molecule type" value="Genomic_DNA"/>
</dbReference>
<dbReference type="EMBL" id="CP002684">
    <property type="protein sequence ID" value="AEE28891.1"/>
    <property type="molecule type" value="Genomic_DNA"/>
</dbReference>
<dbReference type="EMBL" id="CP002684">
    <property type="protein sequence ID" value="AEE28892.1"/>
    <property type="molecule type" value="Genomic_DNA"/>
</dbReference>
<dbReference type="EMBL" id="CP002684">
    <property type="protein sequence ID" value="AEE28893.1"/>
    <property type="molecule type" value="Genomic_DNA"/>
</dbReference>
<dbReference type="EMBL" id="AK175663">
    <property type="protein sequence ID" value="BAD43426.1"/>
    <property type="molecule type" value="mRNA"/>
</dbReference>
<dbReference type="EMBL" id="AK176660">
    <property type="protein sequence ID" value="BAD44423.1"/>
    <property type="molecule type" value="mRNA"/>
</dbReference>
<dbReference type="EMBL" id="AK221656">
    <property type="protein sequence ID" value="BAD95327.1"/>
    <property type="molecule type" value="mRNA"/>
</dbReference>
<dbReference type="EMBL" id="AY050357">
    <property type="protein sequence ID" value="AAK91374.1"/>
    <property type="status" value="ALT_INIT"/>
    <property type="molecule type" value="mRNA"/>
</dbReference>
<dbReference type="EMBL" id="AY094034">
    <property type="protein sequence ID" value="AAM16190.1"/>
    <property type="molecule type" value="mRNA"/>
</dbReference>
<dbReference type="EMBL" id="AF179371">
    <property type="protein sequence ID" value="AAD52685.1"/>
    <property type="molecule type" value="mRNA"/>
</dbReference>
<dbReference type="PIR" id="D86259">
    <property type="entry name" value="D86259"/>
</dbReference>
<dbReference type="RefSeq" id="NP_001031029.1">
    <molecule id="Q9LD47-2"/>
    <property type="nucleotide sequence ID" value="NM_001035952.3"/>
</dbReference>
<dbReference type="RefSeq" id="NP_001031030.1">
    <molecule id="Q9LD47-3"/>
    <property type="nucleotide sequence ID" value="NM_001035953.2"/>
</dbReference>
<dbReference type="RefSeq" id="NP_563910.2">
    <molecule id="Q9LD47-1"/>
    <property type="nucleotide sequence ID" value="NM_101123.4"/>
</dbReference>
<dbReference type="SMR" id="Q9LD47"/>
<dbReference type="BioGRID" id="23048">
    <property type="interactions" value="4"/>
</dbReference>
<dbReference type="FunCoup" id="Q9LD47">
    <property type="interactions" value="1296"/>
</dbReference>
<dbReference type="IntAct" id="Q9LD47">
    <property type="interactions" value="5"/>
</dbReference>
<dbReference type="STRING" id="3702.Q9LD47"/>
<dbReference type="PaxDb" id="3702-AT1G12520.1"/>
<dbReference type="ProteomicsDB" id="223966">
    <molecule id="Q9LD47-1"/>
</dbReference>
<dbReference type="EnsemblPlants" id="AT1G12520.1">
    <molecule id="Q9LD47-1"/>
    <property type="protein sequence ID" value="AT1G12520.1"/>
    <property type="gene ID" value="AT1G12520"/>
</dbReference>
<dbReference type="EnsemblPlants" id="AT1G12520.2">
    <molecule id="Q9LD47-2"/>
    <property type="protein sequence ID" value="AT1G12520.2"/>
    <property type="gene ID" value="AT1G12520"/>
</dbReference>
<dbReference type="EnsemblPlants" id="AT1G12520.3">
    <molecule id="Q9LD47-3"/>
    <property type="protein sequence ID" value="AT1G12520.3"/>
    <property type="gene ID" value="AT1G12520"/>
</dbReference>
<dbReference type="GeneID" id="837808"/>
<dbReference type="Gramene" id="AT1G12520.1">
    <molecule id="Q9LD47-1"/>
    <property type="protein sequence ID" value="AT1G12520.1"/>
    <property type="gene ID" value="AT1G12520"/>
</dbReference>
<dbReference type="Gramene" id="AT1G12520.2">
    <molecule id="Q9LD47-2"/>
    <property type="protein sequence ID" value="AT1G12520.2"/>
    <property type="gene ID" value="AT1G12520"/>
</dbReference>
<dbReference type="Gramene" id="AT1G12520.3">
    <molecule id="Q9LD47-3"/>
    <property type="protein sequence ID" value="AT1G12520.3"/>
    <property type="gene ID" value="AT1G12520"/>
</dbReference>
<dbReference type="KEGG" id="ath:AT1G12520"/>
<dbReference type="Araport" id="AT1G12520"/>
<dbReference type="TAIR" id="AT1G12520">
    <property type="gene designation" value="CCS"/>
</dbReference>
<dbReference type="eggNOG" id="KOG4656">
    <property type="taxonomic scope" value="Eukaryota"/>
</dbReference>
<dbReference type="HOGENOM" id="CLU_056632_0_1_1"/>
<dbReference type="InParanoid" id="Q9LD47"/>
<dbReference type="OMA" id="IFARSPM"/>
<dbReference type="PhylomeDB" id="Q9LD47"/>
<dbReference type="PRO" id="PR:Q9LD47"/>
<dbReference type="Proteomes" id="UP000006548">
    <property type="component" value="Chromosome 1"/>
</dbReference>
<dbReference type="ExpressionAtlas" id="Q9LD47">
    <property type="expression patterns" value="baseline and differential"/>
</dbReference>
<dbReference type="GO" id="GO:0009507">
    <property type="term" value="C:chloroplast"/>
    <property type="evidence" value="ECO:0000314"/>
    <property type="project" value="TAIR"/>
</dbReference>
<dbReference type="GO" id="GO:0009570">
    <property type="term" value="C:chloroplast stroma"/>
    <property type="evidence" value="ECO:0007005"/>
    <property type="project" value="TAIR"/>
</dbReference>
<dbReference type="GO" id="GO:0005829">
    <property type="term" value="C:cytosol"/>
    <property type="evidence" value="ECO:0007669"/>
    <property type="project" value="UniProtKB-SubCell"/>
</dbReference>
<dbReference type="GO" id="GO:0005507">
    <property type="term" value="F:copper ion binding"/>
    <property type="evidence" value="ECO:0007669"/>
    <property type="project" value="InterPro"/>
</dbReference>
<dbReference type="GO" id="GO:0016532">
    <property type="term" value="F:superoxide dismutase copper chaperone activity"/>
    <property type="evidence" value="ECO:0000315"/>
    <property type="project" value="TAIR"/>
</dbReference>
<dbReference type="GO" id="GO:0006878">
    <property type="term" value="P:intracellular copper ion homeostasis"/>
    <property type="evidence" value="ECO:0000304"/>
    <property type="project" value="TAIR"/>
</dbReference>
<dbReference type="GO" id="GO:0006801">
    <property type="term" value="P:superoxide metabolic process"/>
    <property type="evidence" value="ECO:0007669"/>
    <property type="project" value="InterPro"/>
</dbReference>
<dbReference type="CDD" id="cd00371">
    <property type="entry name" value="HMA"/>
    <property type="match status" value="1"/>
</dbReference>
<dbReference type="FunFam" id="2.60.40.200:FF:000006">
    <property type="entry name" value="Copper chaperone for superoxide dismutase"/>
    <property type="match status" value="1"/>
</dbReference>
<dbReference type="FunFam" id="3.30.70.100:FF:000042">
    <property type="entry name" value="Copper chaperone for superoxide dismutase"/>
    <property type="match status" value="1"/>
</dbReference>
<dbReference type="Gene3D" id="3.30.70.100">
    <property type="match status" value="1"/>
</dbReference>
<dbReference type="Gene3D" id="2.60.40.200">
    <property type="entry name" value="Superoxide dismutase, copper/zinc binding domain"/>
    <property type="match status" value="1"/>
</dbReference>
<dbReference type="InterPro" id="IPR006121">
    <property type="entry name" value="HMA_dom"/>
</dbReference>
<dbReference type="InterPro" id="IPR036163">
    <property type="entry name" value="HMA_dom_sf"/>
</dbReference>
<dbReference type="InterPro" id="IPR036423">
    <property type="entry name" value="SOD-like_Cu/Zn_dom_sf"/>
</dbReference>
<dbReference type="InterPro" id="IPR024134">
    <property type="entry name" value="SOD_Cu/Zn_/chaperone"/>
</dbReference>
<dbReference type="InterPro" id="IPR001424">
    <property type="entry name" value="SOD_Cu_Zn_dom"/>
</dbReference>
<dbReference type="PANTHER" id="PTHR10003">
    <property type="entry name" value="SUPEROXIDE DISMUTASE CU-ZN -RELATED"/>
    <property type="match status" value="1"/>
</dbReference>
<dbReference type="Pfam" id="PF00403">
    <property type="entry name" value="HMA"/>
    <property type="match status" value="1"/>
</dbReference>
<dbReference type="Pfam" id="PF00080">
    <property type="entry name" value="Sod_Cu"/>
    <property type="match status" value="1"/>
</dbReference>
<dbReference type="SUPFAM" id="SSF49329">
    <property type="entry name" value="Cu,Zn superoxide dismutase-like"/>
    <property type="match status" value="1"/>
</dbReference>
<dbReference type="SUPFAM" id="SSF55008">
    <property type="entry name" value="HMA, heavy metal-associated domain"/>
    <property type="match status" value="1"/>
</dbReference>
<dbReference type="PROSITE" id="PS50846">
    <property type="entry name" value="HMA_2"/>
    <property type="match status" value="1"/>
</dbReference>
<evidence type="ECO:0000255" key="1"/>
<evidence type="ECO:0000255" key="2">
    <source>
        <dbReference type="PROSITE-ProRule" id="PRU00280"/>
    </source>
</evidence>
<evidence type="ECO:0000269" key="3">
    <source>
    </source>
</evidence>
<evidence type="ECO:0000269" key="4">
    <source>
    </source>
</evidence>
<evidence type="ECO:0000269" key="5">
    <source>
    </source>
</evidence>
<evidence type="ECO:0000269" key="6">
    <source>
    </source>
</evidence>
<evidence type="ECO:0000303" key="7">
    <source ref="4"/>
</evidence>
<evidence type="ECO:0000305" key="8"/>
<comment type="function">
    <text evidence="3 4 5 6">Copper chaperone for the superoxide dismutases CSD1, CSD2 and CSD3. Binds copper ions and delivers them specifically to CSDs. Is required for assistance in CSDs disulfide bond formation and thereby activation of CSDs. May be involved in the negative regulation of heat stress-responsive genes and thermotolerance.</text>
</comment>
<comment type="cofactor">
    <cofactor evidence="2">
        <name>Cu(2+)</name>
        <dbReference type="ChEBI" id="CHEBI:29036"/>
    </cofactor>
    <text evidence="2">Binds 2 copper ions per subunit.</text>
</comment>
<comment type="subunit">
    <text evidence="4">Interacts with CSD1.</text>
</comment>
<comment type="subcellular location">
    <subcellularLocation>
        <location evidence="3">Plastid</location>
        <location evidence="3">Chloroplast</location>
    </subcellularLocation>
    <subcellularLocation>
        <location evidence="3">Cytoplasm</location>
        <location evidence="3">Cytosol</location>
    </subcellularLocation>
    <text evidence="4">It is unclear whether the chloroplastic and cytosolic proteins result from 2 different transcripts or from alternative translation initiation from the same transcript.</text>
</comment>
<comment type="alternative products">
    <event type="alternative splicing"/>
    <isoform>
        <id>Q9LD47-1</id>
        <name>1</name>
        <sequence type="displayed"/>
    </isoform>
    <isoform>
        <id>Q9LD47-2</id>
        <name>2</name>
        <sequence type="described" ref="VSP_046613"/>
    </isoform>
    <isoform>
        <id>Q9LD47-3</id>
        <name>3</name>
        <sequence type="described" ref="VSP_046612"/>
    </isoform>
</comment>
<comment type="tissue specificity">
    <text evidence="4">Expressed in roots, shoots, stems and flowers, and at lower levels in rosette and cauline leaves.</text>
</comment>
<comment type="induction">
    <text evidence="3 6">By copper and senescence. Down-regulated by heat stress.</text>
</comment>
<comment type="disruption phenotype">
    <text evidence="4 6">No visible phenotype under normal growth conditions, but mutant plants have increased tolerance to heat stress.</text>
</comment>
<comment type="similarity">
    <text evidence="8">In the C-terminal section; belongs to the Cu-Zn superoxide dismutase family.</text>
</comment>
<comment type="sequence caution" evidence="8">
    <conflict type="erroneous initiation">
        <sequence resource="EMBL-CDS" id="AAK91374"/>
    </conflict>
    <text>Truncated N-terminus.</text>
</comment>
<proteinExistence type="evidence at protein level"/>
<reference key="1">
    <citation type="journal article" date="2005" name="Plant Physiol.">
        <title>A copper chaperone for superoxide dismutase that confers three types of copper/zinc superoxide dismutase activity in Arabidopsis.</title>
        <authorList>
            <person name="Chu C.C."/>
            <person name="Lee W.C."/>
            <person name="Guo W.Y."/>
            <person name="Pan S.M."/>
            <person name="Chen L.J."/>
            <person name="Li H.M."/>
            <person name="Jinn T.L."/>
        </authorList>
    </citation>
    <scope>NUCLEOTIDE SEQUENCE [MRNA]</scope>
    <scope>FUNCTION</scope>
    <scope>INTERACTION WITH CSD1</scope>
    <scope>TISSUE SPECIFICITY</scope>
    <scope>DISRUPTION PHENOTYPE</scope>
</reference>
<reference key="2">
    <citation type="journal article" date="2000" name="Nature">
        <title>Sequence and analysis of chromosome 1 of the plant Arabidopsis thaliana.</title>
        <authorList>
            <person name="Theologis A."/>
            <person name="Ecker J.R."/>
            <person name="Palm C.J."/>
            <person name="Federspiel N.A."/>
            <person name="Kaul S."/>
            <person name="White O."/>
            <person name="Alonso J."/>
            <person name="Altafi H."/>
            <person name="Araujo R."/>
            <person name="Bowman C.L."/>
            <person name="Brooks S.Y."/>
            <person name="Buehler E."/>
            <person name="Chan A."/>
            <person name="Chao Q."/>
            <person name="Chen H."/>
            <person name="Cheuk R.F."/>
            <person name="Chin C.W."/>
            <person name="Chung M.K."/>
            <person name="Conn L."/>
            <person name="Conway A.B."/>
            <person name="Conway A.R."/>
            <person name="Creasy T.H."/>
            <person name="Dewar K."/>
            <person name="Dunn P."/>
            <person name="Etgu P."/>
            <person name="Feldblyum T.V."/>
            <person name="Feng J.-D."/>
            <person name="Fong B."/>
            <person name="Fujii C.Y."/>
            <person name="Gill J.E."/>
            <person name="Goldsmith A.D."/>
            <person name="Haas B."/>
            <person name="Hansen N.F."/>
            <person name="Hughes B."/>
            <person name="Huizar L."/>
            <person name="Hunter J.L."/>
            <person name="Jenkins J."/>
            <person name="Johnson-Hopson C."/>
            <person name="Khan S."/>
            <person name="Khaykin E."/>
            <person name="Kim C.J."/>
            <person name="Koo H.L."/>
            <person name="Kremenetskaia I."/>
            <person name="Kurtz D.B."/>
            <person name="Kwan A."/>
            <person name="Lam B."/>
            <person name="Langin-Hooper S."/>
            <person name="Lee A."/>
            <person name="Lee J.M."/>
            <person name="Lenz C.A."/>
            <person name="Li J.H."/>
            <person name="Li Y.-P."/>
            <person name="Lin X."/>
            <person name="Liu S.X."/>
            <person name="Liu Z.A."/>
            <person name="Luros J.S."/>
            <person name="Maiti R."/>
            <person name="Marziali A."/>
            <person name="Militscher J."/>
            <person name="Miranda M."/>
            <person name="Nguyen M."/>
            <person name="Nierman W.C."/>
            <person name="Osborne B.I."/>
            <person name="Pai G."/>
            <person name="Peterson J."/>
            <person name="Pham P.K."/>
            <person name="Rizzo M."/>
            <person name="Rooney T."/>
            <person name="Rowley D."/>
            <person name="Sakano H."/>
            <person name="Salzberg S.L."/>
            <person name="Schwartz J.R."/>
            <person name="Shinn P."/>
            <person name="Southwick A.M."/>
            <person name="Sun H."/>
            <person name="Tallon L.J."/>
            <person name="Tambunga G."/>
            <person name="Toriumi M.J."/>
            <person name="Town C.D."/>
            <person name="Utterback T."/>
            <person name="Van Aken S."/>
            <person name="Vaysberg M."/>
            <person name="Vysotskaia V.S."/>
            <person name="Walker M."/>
            <person name="Wu D."/>
            <person name="Yu G."/>
            <person name="Fraser C.M."/>
            <person name="Venter J.C."/>
            <person name="Davis R.W."/>
        </authorList>
    </citation>
    <scope>NUCLEOTIDE SEQUENCE [LARGE SCALE GENOMIC DNA]</scope>
    <source>
        <strain>cv. Columbia</strain>
    </source>
</reference>
<reference key="3">
    <citation type="journal article" date="2017" name="Plant J.">
        <title>Araport11: a complete reannotation of the Arabidopsis thaliana reference genome.</title>
        <authorList>
            <person name="Cheng C.Y."/>
            <person name="Krishnakumar V."/>
            <person name="Chan A.P."/>
            <person name="Thibaud-Nissen F."/>
            <person name="Schobel S."/>
            <person name="Town C.D."/>
        </authorList>
    </citation>
    <scope>GENOME REANNOTATION</scope>
    <source>
        <strain>cv. Columbia</strain>
    </source>
</reference>
<reference key="4">
    <citation type="submission" date="2005-03" db="EMBL/GenBank/DDBJ databases">
        <title>Large-scale analysis of RIKEN Arabidopsis full-length (RAFL) cDNAs.</title>
        <authorList>
            <person name="Totoki Y."/>
            <person name="Seki M."/>
            <person name="Ishida J."/>
            <person name="Nakajima M."/>
            <person name="Enju A."/>
            <person name="Kamiya A."/>
            <person name="Narusaka M."/>
            <person name="Shin-i T."/>
            <person name="Nakagawa M."/>
            <person name="Sakamoto N."/>
            <person name="Oishi K."/>
            <person name="Kohara Y."/>
            <person name="Kobayashi M."/>
            <person name="Toyoda A."/>
            <person name="Sakaki Y."/>
            <person name="Sakurai T."/>
            <person name="Iida K."/>
            <person name="Akiyama K."/>
            <person name="Satou M."/>
            <person name="Toyoda T."/>
            <person name="Konagaya A."/>
            <person name="Carninci P."/>
            <person name="Kawai J."/>
            <person name="Hayashizaki Y."/>
            <person name="Shinozaki K."/>
        </authorList>
    </citation>
    <scope>NUCLEOTIDE SEQUENCE [LARGE SCALE MRNA] (ISOFORMS 1; 2 AND 3)</scope>
    <source>
        <strain>cv. Columbia</strain>
    </source>
</reference>
<reference key="5">
    <citation type="journal article" date="2003" name="Science">
        <title>Empirical analysis of transcriptional activity in the Arabidopsis genome.</title>
        <authorList>
            <person name="Yamada K."/>
            <person name="Lim J."/>
            <person name="Dale J.M."/>
            <person name="Chen H."/>
            <person name="Shinn P."/>
            <person name="Palm C.J."/>
            <person name="Southwick A.M."/>
            <person name="Wu H.C."/>
            <person name="Kim C.J."/>
            <person name="Nguyen M."/>
            <person name="Pham P.K."/>
            <person name="Cheuk R.F."/>
            <person name="Karlin-Newmann G."/>
            <person name="Liu S.X."/>
            <person name="Lam B."/>
            <person name="Sakano H."/>
            <person name="Wu T."/>
            <person name="Yu G."/>
            <person name="Miranda M."/>
            <person name="Quach H.L."/>
            <person name="Tripp M."/>
            <person name="Chang C.H."/>
            <person name="Lee J.M."/>
            <person name="Toriumi M.J."/>
            <person name="Chan M.M."/>
            <person name="Tang C.C."/>
            <person name="Onodera C.S."/>
            <person name="Deng J.M."/>
            <person name="Akiyama K."/>
            <person name="Ansari Y."/>
            <person name="Arakawa T."/>
            <person name="Banh J."/>
            <person name="Banno F."/>
            <person name="Bowser L."/>
            <person name="Brooks S.Y."/>
            <person name="Carninci P."/>
            <person name="Chao Q."/>
            <person name="Choy N."/>
            <person name="Enju A."/>
            <person name="Goldsmith A.D."/>
            <person name="Gurjal M."/>
            <person name="Hansen N.F."/>
            <person name="Hayashizaki Y."/>
            <person name="Johnson-Hopson C."/>
            <person name="Hsuan V.W."/>
            <person name="Iida K."/>
            <person name="Karnes M."/>
            <person name="Khan S."/>
            <person name="Koesema E."/>
            <person name="Ishida J."/>
            <person name="Jiang P.X."/>
            <person name="Jones T."/>
            <person name="Kawai J."/>
            <person name="Kamiya A."/>
            <person name="Meyers C."/>
            <person name="Nakajima M."/>
            <person name="Narusaka M."/>
            <person name="Seki M."/>
            <person name="Sakurai T."/>
            <person name="Satou M."/>
            <person name="Tamse R."/>
            <person name="Vaysberg M."/>
            <person name="Wallender E.K."/>
            <person name="Wong C."/>
            <person name="Yamamura Y."/>
            <person name="Yuan S."/>
            <person name="Shinozaki K."/>
            <person name="Davis R.W."/>
            <person name="Theologis A."/>
            <person name="Ecker J.R."/>
        </authorList>
    </citation>
    <scope>NUCLEOTIDE SEQUENCE [LARGE SCALE MRNA] OF 4-320 (ISOFORM 1)</scope>
    <source>
        <strain>cv. Columbia</strain>
    </source>
</reference>
<reference key="6">
    <citation type="submission" date="1999-08" db="EMBL/GenBank/DDBJ databases">
        <title>Arabidopsis thaliana chloroplast copper chaperone for Cu,Zn superoxide dismutase.</title>
        <authorList>
            <person name="Nersissian A.M."/>
            <person name="Valentine J.S."/>
        </authorList>
    </citation>
    <scope>NUCLEOTIDE SEQUENCE [MRNA] OF 11-320 (ISOFORM 1)</scope>
</reference>
<reference key="7">
    <citation type="journal article" date="2005" name="FEBS Lett.">
        <title>AtCCS is a functional homolog of the yeast copper chaperone Ccs1/Lys7.</title>
        <authorList>
            <person name="Abdel-Ghany S.E."/>
            <person name="Burkhead J.L."/>
            <person name="Gogolin K.A."/>
            <person name="Andres-Colas N."/>
            <person name="Bodecker J.R."/>
            <person name="Puig S."/>
            <person name="Penarrubia L."/>
            <person name="Pilon M."/>
        </authorList>
    </citation>
    <scope>FUNCTION</scope>
    <scope>SUBCELLULAR LOCATION</scope>
    <scope>INDUCTION</scope>
</reference>
<reference key="8">
    <citation type="journal article" date="2012" name="Plant Physiol.">
        <title>Copper chaperone-dependent and -independent activation of three copper-zinc superoxide dismutase homologs localized in different cellular compartments in Arabidopsis.</title>
        <authorList>
            <person name="Huang C.H."/>
            <person name="Kuo W.Y."/>
            <person name="Weiss C."/>
            <person name="Jinn T.L."/>
        </authorList>
    </citation>
    <scope>FUNCTION</scope>
</reference>
<reference key="9">
    <citation type="journal article" date="2013" name="Plant J.">
        <title>Heat stress induction of miR398 triggers a regulatory loop that is critical for thermotolerance in Arabidopsis.</title>
        <authorList>
            <person name="Guan Q."/>
            <person name="Lu X."/>
            <person name="Zeng H."/>
            <person name="Zhang Y."/>
            <person name="Zhu J."/>
        </authorList>
    </citation>
    <scope>FUNCTION</scope>
    <scope>INDUCTION</scope>
    <scope>DISRUPTION PHENOTYPE</scope>
</reference>
<name>CCS_ARATH</name>